<gene>
    <name evidence="1" type="primary">nrdR</name>
    <name type="ordered locus">DICTH_1589</name>
</gene>
<keyword id="KW-0067">ATP-binding</keyword>
<keyword id="KW-0238">DNA-binding</keyword>
<keyword id="KW-0479">Metal-binding</keyword>
<keyword id="KW-0547">Nucleotide-binding</keyword>
<keyword id="KW-0678">Repressor</keyword>
<keyword id="KW-0804">Transcription</keyword>
<keyword id="KW-0805">Transcription regulation</keyword>
<keyword id="KW-0862">Zinc</keyword>
<keyword id="KW-0863">Zinc-finger</keyword>
<proteinExistence type="inferred from homology"/>
<reference key="1">
    <citation type="journal article" date="2014" name="Genome Announc.">
        <title>Complete Genome Sequence of the Extreme Thermophile Dictyoglomus thermophilum H-6-12.</title>
        <authorList>
            <person name="Coil D.A."/>
            <person name="Badger J.H."/>
            <person name="Forberger H.C."/>
            <person name="Riggs F."/>
            <person name="Madupu R."/>
            <person name="Fedorova N."/>
            <person name="Ward N."/>
            <person name="Robb F.T."/>
            <person name="Eisen J.A."/>
        </authorList>
    </citation>
    <scope>NUCLEOTIDE SEQUENCE [LARGE SCALE GENOMIC DNA]</scope>
    <source>
        <strain>ATCC 35947 / DSM 3960 / H-6-12</strain>
    </source>
</reference>
<accession>B5YAD3</accession>
<organism>
    <name type="scientific">Dictyoglomus thermophilum (strain ATCC 35947 / DSM 3960 / H-6-12)</name>
    <dbReference type="NCBI Taxonomy" id="309799"/>
    <lineage>
        <taxon>Bacteria</taxon>
        <taxon>Pseudomonadati</taxon>
        <taxon>Dictyoglomota</taxon>
        <taxon>Dictyoglomia</taxon>
        <taxon>Dictyoglomales</taxon>
        <taxon>Dictyoglomaceae</taxon>
        <taxon>Dictyoglomus</taxon>
    </lineage>
</organism>
<name>NRDR_DICT6</name>
<feature type="chain" id="PRO_1000124496" description="Transcriptional repressor NrdR">
    <location>
        <begin position="1"/>
        <end position="150"/>
    </location>
</feature>
<feature type="domain" description="ATP-cone" evidence="1">
    <location>
        <begin position="49"/>
        <end position="139"/>
    </location>
</feature>
<feature type="zinc finger region" evidence="1">
    <location>
        <begin position="3"/>
        <end position="34"/>
    </location>
</feature>
<comment type="function">
    <text evidence="1">Negatively regulates transcription of bacterial ribonucleotide reductase nrd genes and operons by binding to NrdR-boxes.</text>
</comment>
<comment type="cofactor">
    <cofactor evidence="1">
        <name>Zn(2+)</name>
        <dbReference type="ChEBI" id="CHEBI:29105"/>
    </cofactor>
    <text evidence="1">Binds 1 zinc ion.</text>
</comment>
<comment type="similarity">
    <text evidence="1">Belongs to the NrdR family.</text>
</comment>
<evidence type="ECO:0000255" key="1">
    <source>
        <dbReference type="HAMAP-Rule" id="MF_00440"/>
    </source>
</evidence>
<sequence length="150" mass="17737">MRCPFCGYEDTFVIDTREIEDQRVIRRRRECPNCKNRFTTYERIEEKPIMVIKKDGRREPFDRNKLLAGLQRAVVKRNIDNEKLEAIIDEIIANIRKQGISEITSKEIGKMVLEKLKDLDAVAYVRFASVYQEFSSLEEFAKLLSQMKKE</sequence>
<protein>
    <recommendedName>
        <fullName evidence="1">Transcriptional repressor NrdR</fullName>
    </recommendedName>
</protein>
<dbReference type="EMBL" id="CP001146">
    <property type="protein sequence ID" value="ACI19112.1"/>
    <property type="molecule type" value="Genomic_DNA"/>
</dbReference>
<dbReference type="RefSeq" id="WP_012547744.1">
    <property type="nucleotide sequence ID" value="NC_011297.1"/>
</dbReference>
<dbReference type="SMR" id="B5YAD3"/>
<dbReference type="STRING" id="309799.DICTH_1589"/>
<dbReference type="PaxDb" id="309799-DICTH_1589"/>
<dbReference type="KEGG" id="dth:DICTH_1589"/>
<dbReference type="eggNOG" id="COG1327">
    <property type="taxonomic scope" value="Bacteria"/>
</dbReference>
<dbReference type="HOGENOM" id="CLU_108412_0_0_0"/>
<dbReference type="OrthoDB" id="9807461at2"/>
<dbReference type="Proteomes" id="UP000001733">
    <property type="component" value="Chromosome"/>
</dbReference>
<dbReference type="GO" id="GO:0005524">
    <property type="term" value="F:ATP binding"/>
    <property type="evidence" value="ECO:0007669"/>
    <property type="project" value="UniProtKB-KW"/>
</dbReference>
<dbReference type="GO" id="GO:0003677">
    <property type="term" value="F:DNA binding"/>
    <property type="evidence" value="ECO:0007669"/>
    <property type="project" value="UniProtKB-KW"/>
</dbReference>
<dbReference type="GO" id="GO:0008270">
    <property type="term" value="F:zinc ion binding"/>
    <property type="evidence" value="ECO:0007669"/>
    <property type="project" value="UniProtKB-UniRule"/>
</dbReference>
<dbReference type="GO" id="GO:0045892">
    <property type="term" value="P:negative regulation of DNA-templated transcription"/>
    <property type="evidence" value="ECO:0007669"/>
    <property type="project" value="UniProtKB-UniRule"/>
</dbReference>
<dbReference type="HAMAP" id="MF_00440">
    <property type="entry name" value="NrdR"/>
    <property type="match status" value="1"/>
</dbReference>
<dbReference type="InterPro" id="IPR005144">
    <property type="entry name" value="ATP-cone_dom"/>
</dbReference>
<dbReference type="InterPro" id="IPR055173">
    <property type="entry name" value="NrdR-like_N"/>
</dbReference>
<dbReference type="InterPro" id="IPR003796">
    <property type="entry name" value="RNR_NrdR-like"/>
</dbReference>
<dbReference type="NCBIfam" id="TIGR00244">
    <property type="entry name" value="transcriptional regulator NrdR"/>
    <property type="match status" value="1"/>
</dbReference>
<dbReference type="PANTHER" id="PTHR30455">
    <property type="entry name" value="TRANSCRIPTIONAL REPRESSOR NRDR"/>
    <property type="match status" value="1"/>
</dbReference>
<dbReference type="PANTHER" id="PTHR30455:SF2">
    <property type="entry name" value="TRANSCRIPTIONAL REPRESSOR NRDR"/>
    <property type="match status" value="1"/>
</dbReference>
<dbReference type="Pfam" id="PF03477">
    <property type="entry name" value="ATP-cone"/>
    <property type="match status" value="1"/>
</dbReference>
<dbReference type="Pfam" id="PF22811">
    <property type="entry name" value="Zn_ribbon_NrdR"/>
    <property type="match status" value="1"/>
</dbReference>
<dbReference type="PROSITE" id="PS51161">
    <property type="entry name" value="ATP_CONE"/>
    <property type="match status" value="1"/>
</dbReference>